<reference key="1">
    <citation type="submission" date="2008-10" db="EMBL/GenBank/DDBJ databases">
        <title>Genome sequence of Bacillus cereus B4264.</title>
        <authorList>
            <person name="Dodson R.J."/>
            <person name="Durkin A.S."/>
            <person name="Rosovitz M.J."/>
            <person name="Rasko D.A."/>
            <person name="Hoffmaster A."/>
            <person name="Ravel J."/>
            <person name="Sutton G."/>
        </authorList>
    </citation>
    <scope>NUCLEOTIDE SEQUENCE [LARGE SCALE GENOMIC DNA]</scope>
    <source>
        <strain>B4264</strain>
    </source>
</reference>
<sequence>MKVIFLKDVKGKGKKGEVKNVPDGYANNFLLKQGLAAEATNSSMKTLEAQKRKEEKDAAAELENAKELKETLEKLTVELKAKSGEGGRLFGSITSKQIVDAMQKSHKIKLDKRKFEMDDAIRALGYTNVTVKLHPQVTATVKVHVSEQ</sequence>
<dbReference type="EMBL" id="CP001176">
    <property type="protein sequence ID" value="ACK63499.1"/>
    <property type="molecule type" value="Genomic_DNA"/>
</dbReference>
<dbReference type="RefSeq" id="WP_000864228.1">
    <property type="nucleotide sequence ID" value="NZ_VEHB01000004.1"/>
</dbReference>
<dbReference type="SMR" id="B7HGC9"/>
<dbReference type="KEGG" id="bcb:BCB4264_A5596"/>
<dbReference type="HOGENOM" id="CLU_078938_3_2_9"/>
<dbReference type="Proteomes" id="UP000007096">
    <property type="component" value="Chromosome"/>
</dbReference>
<dbReference type="GO" id="GO:1990904">
    <property type="term" value="C:ribonucleoprotein complex"/>
    <property type="evidence" value="ECO:0007669"/>
    <property type="project" value="UniProtKB-KW"/>
</dbReference>
<dbReference type="GO" id="GO:0005840">
    <property type="term" value="C:ribosome"/>
    <property type="evidence" value="ECO:0007669"/>
    <property type="project" value="UniProtKB-KW"/>
</dbReference>
<dbReference type="GO" id="GO:0019843">
    <property type="term" value="F:rRNA binding"/>
    <property type="evidence" value="ECO:0007669"/>
    <property type="project" value="UniProtKB-UniRule"/>
</dbReference>
<dbReference type="GO" id="GO:0003735">
    <property type="term" value="F:structural constituent of ribosome"/>
    <property type="evidence" value="ECO:0007669"/>
    <property type="project" value="InterPro"/>
</dbReference>
<dbReference type="GO" id="GO:0006412">
    <property type="term" value="P:translation"/>
    <property type="evidence" value="ECO:0007669"/>
    <property type="project" value="UniProtKB-UniRule"/>
</dbReference>
<dbReference type="FunFam" id="3.10.430.100:FF:000002">
    <property type="entry name" value="50S ribosomal protein L9"/>
    <property type="match status" value="1"/>
</dbReference>
<dbReference type="FunFam" id="3.40.5.10:FF:000002">
    <property type="entry name" value="50S ribosomal protein L9"/>
    <property type="match status" value="1"/>
</dbReference>
<dbReference type="Gene3D" id="3.10.430.100">
    <property type="entry name" value="Ribosomal protein L9, C-terminal domain"/>
    <property type="match status" value="1"/>
</dbReference>
<dbReference type="Gene3D" id="3.40.5.10">
    <property type="entry name" value="Ribosomal protein L9, N-terminal domain"/>
    <property type="match status" value="1"/>
</dbReference>
<dbReference type="HAMAP" id="MF_00503">
    <property type="entry name" value="Ribosomal_bL9"/>
    <property type="match status" value="1"/>
</dbReference>
<dbReference type="InterPro" id="IPR000244">
    <property type="entry name" value="Ribosomal_bL9"/>
</dbReference>
<dbReference type="InterPro" id="IPR009027">
    <property type="entry name" value="Ribosomal_bL9/RNase_H1_N"/>
</dbReference>
<dbReference type="InterPro" id="IPR020594">
    <property type="entry name" value="Ribosomal_bL9_bac/chp"/>
</dbReference>
<dbReference type="InterPro" id="IPR020069">
    <property type="entry name" value="Ribosomal_bL9_C"/>
</dbReference>
<dbReference type="InterPro" id="IPR036791">
    <property type="entry name" value="Ribosomal_bL9_C_sf"/>
</dbReference>
<dbReference type="InterPro" id="IPR020070">
    <property type="entry name" value="Ribosomal_bL9_N"/>
</dbReference>
<dbReference type="InterPro" id="IPR036935">
    <property type="entry name" value="Ribosomal_bL9_N_sf"/>
</dbReference>
<dbReference type="NCBIfam" id="TIGR00158">
    <property type="entry name" value="L9"/>
    <property type="match status" value="1"/>
</dbReference>
<dbReference type="PANTHER" id="PTHR21368">
    <property type="entry name" value="50S RIBOSOMAL PROTEIN L9"/>
    <property type="match status" value="1"/>
</dbReference>
<dbReference type="Pfam" id="PF03948">
    <property type="entry name" value="Ribosomal_L9_C"/>
    <property type="match status" value="1"/>
</dbReference>
<dbReference type="Pfam" id="PF01281">
    <property type="entry name" value="Ribosomal_L9_N"/>
    <property type="match status" value="1"/>
</dbReference>
<dbReference type="SUPFAM" id="SSF55658">
    <property type="entry name" value="L9 N-domain-like"/>
    <property type="match status" value="1"/>
</dbReference>
<dbReference type="SUPFAM" id="SSF55653">
    <property type="entry name" value="Ribosomal protein L9 C-domain"/>
    <property type="match status" value="1"/>
</dbReference>
<dbReference type="PROSITE" id="PS00651">
    <property type="entry name" value="RIBOSOMAL_L9"/>
    <property type="match status" value="1"/>
</dbReference>
<protein>
    <recommendedName>
        <fullName evidence="1">Large ribosomal subunit protein bL9</fullName>
    </recommendedName>
    <alternativeName>
        <fullName evidence="2">50S ribosomal protein L9</fullName>
    </alternativeName>
</protein>
<feature type="chain" id="PRO_1000126866" description="Large ribosomal subunit protein bL9">
    <location>
        <begin position="1"/>
        <end position="148"/>
    </location>
</feature>
<evidence type="ECO:0000255" key="1">
    <source>
        <dbReference type="HAMAP-Rule" id="MF_00503"/>
    </source>
</evidence>
<evidence type="ECO:0000305" key="2"/>
<organism>
    <name type="scientific">Bacillus cereus (strain B4264)</name>
    <dbReference type="NCBI Taxonomy" id="405532"/>
    <lineage>
        <taxon>Bacteria</taxon>
        <taxon>Bacillati</taxon>
        <taxon>Bacillota</taxon>
        <taxon>Bacilli</taxon>
        <taxon>Bacillales</taxon>
        <taxon>Bacillaceae</taxon>
        <taxon>Bacillus</taxon>
        <taxon>Bacillus cereus group</taxon>
    </lineage>
</organism>
<proteinExistence type="inferred from homology"/>
<keyword id="KW-0687">Ribonucleoprotein</keyword>
<keyword id="KW-0689">Ribosomal protein</keyword>
<keyword id="KW-0694">RNA-binding</keyword>
<keyword id="KW-0699">rRNA-binding</keyword>
<comment type="function">
    <text evidence="1">Binds to the 23S rRNA.</text>
</comment>
<comment type="similarity">
    <text evidence="1">Belongs to the bacterial ribosomal protein bL9 family.</text>
</comment>
<gene>
    <name evidence="1" type="primary">rplI</name>
    <name type="ordered locus">BCB4264_A5596</name>
</gene>
<accession>B7HGC9</accession>
<name>RL9_BACC4</name>